<gene>
    <name type="primary">AMS</name>
    <name type="synonym">BHLH21</name>
    <name type="synonym">EN48</name>
    <name type="ordered locus">At2g16910</name>
    <name type="ORF">F12A24.9</name>
</gene>
<protein>
    <recommendedName>
        <fullName>Transcription factor ABORTED MICROSPORES</fullName>
    </recommendedName>
    <alternativeName>
        <fullName>Basic helix-loop-helix protein 21</fullName>
        <shortName>AtbHLH21</shortName>
        <shortName>bHLH 21</shortName>
    </alternativeName>
    <alternativeName>
        <fullName>Transcription factor EN 48</fullName>
    </alternativeName>
    <alternativeName>
        <fullName>bHLH transcription factor bHLH021</fullName>
    </alternativeName>
</protein>
<reference key="1">
    <citation type="journal article" date="1999" name="Nature">
        <title>Sequence and analysis of chromosome 2 of the plant Arabidopsis thaliana.</title>
        <authorList>
            <person name="Lin X."/>
            <person name="Kaul S."/>
            <person name="Rounsley S.D."/>
            <person name="Shea T.P."/>
            <person name="Benito M.-I."/>
            <person name="Town C.D."/>
            <person name="Fujii C.Y."/>
            <person name="Mason T.M."/>
            <person name="Bowman C.L."/>
            <person name="Barnstead M.E."/>
            <person name="Feldblyum T.V."/>
            <person name="Buell C.R."/>
            <person name="Ketchum K.A."/>
            <person name="Lee J.J."/>
            <person name="Ronning C.M."/>
            <person name="Koo H.L."/>
            <person name="Moffat K.S."/>
            <person name="Cronin L.A."/>
            <person name="Shen M."/>
            <person name="Pai G."/>
            <person name="Van Aken S."/>
            <person name="Umayam L."/>
            <person name="Tallon L.J."/>
            <person name="Gill J.E."/>
            <person name="Adams M.D."/>
            <person name="Carrera A.J."/>
            <person name="Creasy T.H."/>
            <person name="Goodman H.M."/>
            <person name="Somerville C.R."/>
            <person name="Copenhaver G.P."/>
            <person name="Preuss D."/>
            <person name="Nierman W.C."/>
            <person name="White O."/>
            <person name="Eisen J.A."/>
            <person name="Salzberg S.L."/>
            <person name="Fraser C.M."/>
            <person name="Venter J.C."/>
        </authorList>
    </citation>
    <scope>NUCLEOTIDE SEQUENCE [LARGE SCALE GENOMIC DNA]</scope>
    <source>
        <strain>cv. Columbia</strain>
    </source>
</reference>
<reference key="2">
    <citation type="journal article" date="2017" name="Plant J.">
        <title>Araport11: a complete reannotation of the Arabidopsis thaliana reference genome.</title>
        <authorList>
            <person name="Cheng C.Y."/>
            <person name="Krishnakumar V."/>
            <person name="Chan A.P."/>
            <person name="Thibaud-Nissen F."/>
            <person name="Schobel S."/>
            <person name="Town C.D."/>
        </authorList>
    </citation>
    <scope>GENOME REANNOTATION</scope>
    <source>
        <strain>cv. Columbia</strain>
    </source>
</reference>
<reference key="3">
    <citation type="journal article" date="2003" name="Mol. Biol. Evol.">
        <title>The basic helix-loop-helix transcription factor family in plants: a genome-wide study of protein structure and functional diversity.</title>
        <authorList>
            <person name="Heim M.A."/>
            <person name="Jakoby M."/>
            <person name="Werber M."/>
            <person name="Martin C."/>
            <person name="Weisshaar B."/>
            <person name="Bailey P.C."/>
        </authorList>
    </citation>
    <scope>NUCLEOTIDE SEQUENCE [MRNA] OF 326-571</scope>
    <scope>TISSUE SPECIFICITY</scope>
    <scope>GENE FAMILY</scope>
    <scope>NOMENCLATURE</scope>
    <source>
        <strain>cv. Columbia</strain>
    </source>
</reference>
<reference key="4">
    <citation type="journal article" date="2003" name="Plant Cell">
        <title>The Arabidopsis basic/helix-loop-helix transcription factor family.</title>
        <authorList>
            <person name="Toledo-Ortiz G."/>
            <person name="Huq E."/>
            <person name="Quail P.H."/>
        </authorList>
    </citation>
    <scope>GENE FAMILY</scope>
</reference>
<reference key="5">
    <citation type="journal article" date="2003" name="Plant Cell">
        <title>Update on the basic helix-loop-helix transcription factor gene family in Arabidopsis thaliana.</title>
        <authorList>
            <person name="Bailey P.C."/>
            <person name="Martin C."/>
            <person name="Toledo-Ortiz G."/>
            <person name="Quail P.H."/>
            <person name="Huq E."/>
            <person name="Heim M.A."/>
            <person name="Jakoby M."/>
            <person name="Werber M."/>
            <person name="Weisshaar B."/>
        </authorList>
    </citation>
    <scope>GENE FAMILY</scope>
    <scope>NOMENCLATURE</scope>
</reference>
<reference key="6">
    <citation type="journal article" date="2003" name="Plant J.">
        <title>The Arabidopsis ABORTED MICROSPORES (AMS) gene encodes a MYC class transcription factor.</title>
        <authorList>
            <person name="Sorensen A.-M."/>
            <person name="Kroeber S."/>
            <person name="Unte U.S."/>
            <person name="Huijser P."/>
            <person name="Dekker K."/>
            <person name="Saedler H."/>
        </authorList>
    </citation>
    <scope>FUNCTION</scope>
    <scope>DEVELOPMENTAL STAGE</scope>
    <scope>TISSUE SPECIFICITY</scope>
</reference>
<reference key="7">
    <citation type="journal article" date="2008" name="Plant Mol. Biol.">
        <title>The Arabidopsis SET-domain protein ASHR3 is involved in stamen development and interacts with the bHLH transcription factor ABORTED MICROSPORES (AMS).</title>
        <authorList>
            <person name="Thorstensen T."/>
            <person name="Grini P.E."/>
            <person name="Mercy I.S."/>
            <person name="Alm V."/>
            <person name="Erdal S."/>
            <person name="Aasland R."/>
            <person name="Aalen R.B."/>
        </authorList>
    </citation>
    <scope>INTERACTION WITH ASHR3</scope>
</reference>
<reference key="8">
    <citation type="journal article" date="2014" name="Nat. Commun.">
        <title>The tapetal AHL family protein TEK determines nexine formation in the pollen wall.</title>
        <authorList>
            <person name="Lou Y."/>
            <person name="Xu X.F."/>
            <person name="Zhu J."/>
            <person name="Gu J.N."/>
            <person name="Blackmore S."/>
            <person name="Yang Z.N."/>
        </authorList>
    </citation>
    <scope>FUNCTION</scope>
</reference>
<dbReference type="EMBL" id="AC005167">
    <property type="protein sequence ID" value="AAC64222.1"/>
    <property type="status" value="ALT_SEQ"/>
    <property type="molecule type" value="Genomic_DNA"/>
</dbReference>
<dbReference type="EMBL" id="CP002685">
    <property type="protein sequence ID" value="AEC06553.1"/>
    <property type="molecule type" value="Genomic_DNA"/>
</dbReference>
<dbReference type="EMBL" id="AF488565">
    <property type="status" value="NOT_ANNOTATED_CDS"/>
    <property type="molecule type" value="mRNA"/>
</dbReference>
<dbReference type="PIR" id="G84545">
    <property type="entry name" value="G84545"/>
</dbReference>
<dbReference type="RefSeq" id="NP_179283.2">
    <property type="nucleotide sequence ID" value="NM_127244.4"/>
</dbReference>
<dbReference type="SMR" id="Q9ZVX2"/>
<dbReference type="BioGRID" id="1551">
    <property type="interactions" value="3"/>
</dbReference>
<dbReference type="FunCoup" id="Q9ZVX2">
    <property type="interactions" value="94"/>
</dbReference>
<dbReference type="IntAct" id="Q9ZVX2">
    <property type="interactions" value="4"/>
</dbReference>
<dbReference type="STRING" id="3702.Q9ZVX2"/>
<dbReference type="PaxDb" id="3702-AT2G16910.1"/>
<dbReference type="ProteomicsDB" id="245019"/>
<dbReference type="EnsemblPlants" id="AT2G16910.1">
    <property type="protein sequence ID" value="AT2G16910.1"/>
    <property type="gene ID" value="AT2G16910"/>
</dbReference>
<dbReference type="GeneID" id="816194"/>
<dbReference type="Gramene" id="AT2G16910.1">
    <property type="protein sequence ID" value="AT2G16910.1"/>
    <property type="gene ID" value="AT2G16910"/>
</dbReference>
<dbReference type="KEGG" id="ath:AT2G16910"/>
<dbReference type="Araport" id="AT2G16910"/>
<dbReference type="TAIR" id="AT2G16910">
    <property type="gene designation" value="AMS"/>
</dbReference>
<dbReference type="eggNOG" id="ENOG502QQUB">
    <property type="taxonomic scope" value="Eukaryota"/>
</dbReference>
<dbReference type="HOGENOM" id="CLU_037477_0_0_1"/>
<dbReference type="InParanoid" id="Q9ZVX2"/>
<dbReference type="OMA" id="HPRTKAC"/>
<dbReference type="PhylomeDB" id="Q9ZVX2"/>
<dbReference type="PRO" id="PR:Q9ZVX2"/>
<dbReference type="Proteomes" id="UP000006548">
    <property type="component" value="Chromosome 2"/>
</dbReference>
<dbReference type="ExpressionAtlas" id="Q9ZVX2">
    <property type="expression patterns" value="baseline and differential"/>
</dbReference>
<dbReference type="GO" id="GO:0005634">
    <property type="term" value="C:nucleus"/>
    <property type="evidence" value="ECO:0000314"/>
    <property type="project" value="TAIR"/>
</dbReference>
<dbReference type="GO" id="GO:0003682">
    <property type="term" value="F:chromatin binding"/>
    <property type="evidence" value="ECO:0000314"/>
    <property type="project" value="TAIR"/>
</dbReference>
<dbReference type="GO" id="GO:0003700">
    <property type="term" value="F:DNA-binding transcription factor activity"/>
    <property type="evidence" value="ECO:0000250"/>
    <property type="project" value="TAIR"/>
</dbReference>
<dbReference type="GO" id="GO:0046983">
    <property type="term" value="F:protein dimerization activity"/>
    <property type="evidence" value="ECO:0007669"/>
    <property type="project" value="InterPro"/>
</dbReference>
<dbReference type="GO" id="GO:0000978">
    <property type="term" value="F:RNA polymerase II cis-regulatory region sequence-specific DNA binding"/>
    <property type="evidence" value="ECO:0000314"/>
    <property type="project" value="TAIR"/>
</dbReference>
<dbReference type="GO" id="GO:0048658">
    <property type="term" value="P:anther wall tapetum development"/>
    <property type="evidence" value="ECO:0000315"/>
    <property type="project" value="TAIR"/>
</dbReference>
<dbReference type="GO" id="GO:0009555">
    <property type="term" value="P:pollen development"/>
    <property type="evidence" value="ECO:0000315"/>
    <property type="project" value="TAIR"/>
</dbReference>
<dbReference type="GO" id="GO:0006355">
    <property type="term" value="P:regulation of DNA-templated transcription"/>
    <property type="evidence" value="ECO:0000304"/>
    <property type="project" value="TAIR"/>
</dbReference>
<dbReference type="CDD" id="cd11443">
    <property type="entry name" value="bHLH_AtAMS_like"/>
    <property type="match status" value="1"/>
</dbReference>
<dbReference type="Gene3D" id="4.10.280.10">
    <property type="entry name" value="Helix-loop-helix DNA-binding domain"/>
    <property type="match status" value="1"/>
</dbReference>
<dbReference type="InterPro" id="IPR054502">
    <property type="entry name" value="bHLH-TF_ACT-like_plant"/>
</dbReference>
<dbReference type="InterPro" id="IPR011598">
    <property type="entry name" value="bHLH_dom"/>
</dbReference>
<dbReference type="InterPro" id="IPR036638">
    <property type="entry name" value="HLH_DNA-bd_sf"/>
</dbReference>
<dbReference type="InterPro" id="IPR025610">
    <property type="entry name" value="MYC/MYB_N"/>
</dbReference>
<dbReference type="InterPro" id="IPR051358">
    <property type="entry name" value="TF_AMS/ICE1/BHLH6-like"/>
</dbReference>
<dbReference type="PANTHER" id="PTHR31945:SF11">
    <property type="entry name" value="TRANSCRIPTION FACTOR ABORTED MICROSPORES"/>
    <property type="match status" value="1"/>
</dbReference>
<dbReference type="PANTHER" id="PTHR31945">
    <property type="entry name" value="TRANSCRIPTION FACTOR SCREAM2-RELATED"/>
    <property type="match status" value="1"/>
</dbReference>
<dbReference type="Pfam" id="PF14215">
    <property type="entry name" value="bHLH-MYC_N"/>
    <property type="match status" value="1"/>
</dbReference>
<dbReference type="Pfam" id="PF22754">
    <property type="entry name" value="bHLH-TF_ACT-like_plant"/>
    <property type="match status" value="1"/>
</dbReference>
<dbReference type="Pfam" id="PF00010">
    <property type="entry name" value="HLH"/>
    <property type="match status" value="1"/>
</dbReference>
<dbReference type="SMART" id="SM00353">
    <property type="entry name" value="HLH"/>
    <property type="match status" value="1"/>
</dbReference>
<dbReference type="SUPFAM" id="SSF47459">
    <property type="entry name" value="HLH, helix-loop-helix DNA-binding domain"/>
    <property type="match status" value="1"/>
</dbReference>
<dbReference type="PROSITE" id="PS50888">
    <property type="entry name" value="BHLH"/>
    <property type="match status" value="1"/>
</dbReference>
<comment type="function">
    <text evidence="3 6">Transcription factor. Plays a crucial role in tapetum development. Required for male fertility and pollen differentiation, especially during the post-meiotic transcriptional regulation of microspore development within the developing anther (PubMed:12535353). Binds E-box regions in the AHL16/TEK promoter.</text>
</comment>
<comment type="subunit">
    <text evidence="5 7">Homodimer (Probable). Interacts with ASHR3.</text>
</comment>
<comment type="subcellular location">
    <subcellularLocation>
        <location evidence="1">Nucleus</location>
    </subcellularLocation>
</comment>
<comment type="tissue specificity">
    <text evidence="3 4">Mostly expressed in closed, post-meiotic buds, and, to a lower extent, in pre-meiotic buds. Detected in leaves, stems, and flowers.</text>
</comment>
<comment type="developmental stage">
    <text evidence="3">First observed a bud stage of 0.6-mm, shortly after microspore release from the postmeiotic tetrads. Later restricted within the tapetum, microspores and anther locule. Still visible within the haploid nuclei, each of which had migrated to the pollen cell wall prior to pollen mitosis I. Not expressed later.</text>
</comment>
<comment type="sequence caution" evidence="7">
    <conflict type="erroneous gene model prediction">
        <sequence resource="EMBL-CDS" id="AAC64222"/>
    </conflict>
</comment>
<accession>Q9ZVX2</accession>
<keyword id="KW-0217">Developmental protein</keyword>
<keyword id="KW-0238">DNA-binding</keyword>
<keyword id="KW-0539">Nucleus</keyword>
<keyword id="KW-1185">Reference proteome</keyword>
<keyword id="KW-0804">Transcription</keyword>
<keyword id="KW-0805">Transcription regulation</keyword>
<feature type="chain" id="PRO_0000358840" description="Transcription factor ABORTED MICROSPORES">
    <location>
        <begin position="1"/>
        <end position="571"/>
    </location>
</feature>
<feature type="domain" description="bHLH" evidence="1">
    <location>
        <begin position="310"/>
        <end position="359"/>
    </location>
</feature>
<feature type="region of interest" description="Disordered" evidence="2">
    <location>
        <begin position="275"/>
        <end position="321"/>
    </location>
</feature>
<feature type="region of interest" description="Disordered" evidence="2">
    <location>
        <begin position="365"/>
        <end position="390"/>
    </location>
</feature>
<feature type="region of interest" description="Disordered" evidence="2">
    <location>
        <begin position="536"/>
        <end position="571"/>
    </location>
</feature>
<feature type="compositionally biased region" description="Basic and acidic residues" evidence="2">
    <location>
        <begin position="275"/>
        <end position="284"/>
    </location>
</feature>
<feature type="compositionally biased region" description="Acidic residues" evidence="2">
    <location>
        <begin position="368"/>
        <end position="378"/>
    </location>
</feature>
<feature type="compositionally biased region" description="Polar residues" evidence="2">
    <location>
        <begin position="381"/>
        <end position="390"/>
    </location>
</feature>
<feature type="compositionally biased region" description="Basic residues" evidence="2">
    <location>
        <begin position="556"/>
        <end position="571"/>
    </location>
</feature>
<feature type="sequence conflict" description="In Ref. 3; AF488565." evidence="7" ref="3">
    <original>S</original>
    <variation>G</variation>
    <location>
        <position position="477"/>
    </location>
</feature>
<feature type="sequence conflict" description="In Ref. 3; AF488565." evidence="7" ref="3">
    <original>N</original>
    <variation>D</variation>
    <location>
        <position position="525"/>
    </location>
</feature>
<feature type="sequence conflict" description="In Ref. 3; AF488565." evidence="7" ref="3">
    <original>N</original>
    <variation>S</variation>
    <location>
        <position position="542"/>
    </location>
</feature>
<sequence length="571" mass="64879">MESNMQNLLEKLRPLVGARAWDYCVLWRLNEDQRFVKWMGCCCGGTELIAENGTEEFSYGGCRDVMFHHPRTKSCEFLSHLPASIPLDSGIYAETLLTNQTGWLSESSEPSFMQETICTRVLIPIPGGLVELFATRHVAEDQNVVDFVMGHCNMLMDDSVTINMMVADEVESKPYGMLSGDIQQKGSKEEDMMNLPSSYDISADQIRLNFLPQMSDYETQHLKMKSDYHHQALGYLPENGNKEMMGMNPFNTVEEDGIPVIGEPSLLVNEQQVVNDKDMNENGRVDSGSDCSDQIDDEDDPKYKKKSGKGSQAKNLMAERRRRKKLNDRLYALRSLVPRITKLDRASILGDAINYVKELQNEAKELQDELEENSETEDGSNRPQGGMSLNGTVVTGFHPGLSCNSNVPSVKQDVDLENSNDKGQEMEPQVDVAQLDGREFFVKVICEYKPGGFTRLMEALDSLGLEVTNANTTRYLSLVSNVFKVEKNDNEMVQAEHVRNSLLEITRNTSRGWQDDQMATGSMQNEKNEVDYQHYDDHQHHNGHHHPFDHQMNQSAHHHHHHQHINHYHNQ</sequence>
<name>AMS_ARATH</name>
<evidence type="ECO:0000255" key="1">
    <source>
        <dbReference type="PROSITE-ProRule" id="PRU00981"/>
    </source>
</evidence>
<evidence type="ECO:0000256" key="2">
    <source>
        <dbReference type="SAM" id="MobiDB-lite"/>
    </source>
</evidence>
<evidence type="ECO:0000269" key="3">
    <source>
    </source>
</evidence>
<evidence type="ECO:0000269" key="4">
    <source>
    </source>
</evidence>
<evidence type="ECO:0000269" key="5">
    <source>
    </source>
</evidence>
<evidence type="ECO:0000269" key="6">
    <source>
    </source>
</evidence>
<evidence type="ECO:0000305" key="7"/>
<proteinExistence type="evidence at protein level"/>
<organism>
    <name type="scientific">Arabidopsis thaliana</name>
    <name type="common">Mouse-ear cress</name>
    <dbReference type="NCBI Taxonomy" id="3702"/>
    <lineage>
        <taxon>Eukaryota</taxon>
        <taxon>Viridiplantae</taxon>
        <taxon>Streptophyta</taxon>
        <taxon>Embryophyta</taxon>
        <taxon>Tracheophyta</taxon>
        <taxon>Spermatophyta</taxon>
        <taxon>Magnoliopsida</taxon>
        <taxon>eudicotyledons</taxon>
        <taxon>Gunneridae</taxon>
        <taxon>Pentapetalae</taxon>
        <taxon>rosids</taxon>
        <taxon>malvids</taxon>
        <taxon>Brassicales</taxon>
        <taxon>Brassicaceae</taxon>
        <taxon>Camelineae</taxon>
        <taxon>Arabidopsis</taxon>
    </lineage>
</organism>